<comment type="subcellular location">
    <subcellularLocation>
        <location>Nucleus</location>
    </subcellularLocation>
</comment>
<comment type="sequence caution" evidence="2">
    <conflict type="erroneous initiation">
        <sequence resource="EMBL-CDS" id="DAA01305"/>
    </conflict>
    <text>Extended N-terminus.</text>
</comment>
<accession>Q8SWA6</accession>
<accession>Q7SI87</accession>
<feature type="chain" id="PRO_0000048920" description="Homeobox protein HD-11">
    <location>
        <begin position="1"/>
        <end position="138"/>
    </location>
</feature>
<feature type="DNA-binding region" description="Homeobox" evidence="1">
    <location>
        <begin position="30"/>
        <end position="89"/>
    </location>
</feature>
<protein>
    <recommendedName>
        <fullName>Homeobox protein HD-11</fullName>
    </recommendedName>
    <alternativeName>
        <fullName>EcHD-11</fullName>
    </alternativeName>
</protein>
<proteinExistence type="predicted"/>
<gene>
    <name type="primary">HD-11</name>
    <name type="ordered locus">ECU02_1200</name>
</gene>
<keyword id="KW-0238">DNA-binding</keyword>
<keyword id="KW-0371">Homeobox</keyword>
<keyword id="KW-0539">Nucleus</keyword>
<keyword id="KW-1185">Reference proteome</keyword>
<sequence>MTSERTKNLRELEAALGLLKLSGFQMNRYCTGKQMRKTRLQTCVLNRIFEISRFPSSKTIVDLALLINVHPKSIQKWFQNTRQAIRKKGSTKGALLLAESEEHSAVDIPLPILADIVEIERRTVSKFGLERVFLQDSN</sequence>
<name>HD11_ENCCU</name>
<reference key="1">
    <citation type="journal article" date="2001" name="Nature">
        <title>Genome sequence and gene compaction of the eukaryote parasite Encephalitozoon cuniculi.</title>
        <authorList>
            <person name="Katinka M.D."/>
            <person name="Duprat S."/>
            <person name="Cornillot E."/>
            <person name="Metenier G."/>
            <person name="Thomarat F."/>
            <person name="Prensier G."/>
            <person name="Barbe V."/>
            <person name="Peyretaillade E."/>
            <person name="Brottier P."/>
            <person name="Wincker P."/>
            <person name="Delbac F."/>
            <person name="El Alaoui H."/>
            <person name="Peyret P."/>
            <person name="Saurin W."/>
            <person name="Gouy M."/>
            <person name="Weissenbach J."/>
            <person name="Vivares C.P."/>
        </authorList>
    </citation>
    <scope>NUCLEOTIDE SEQUENCE [LARGE SCALE GENOMIC DNA]</scope>
    <source>
        <strain>GB-M1</strain>
    </source>
</reference>
<reference key="2">
    <citation type="journal article" date="2009" name="BMC Genomics">
        <title>Identification of transcriptional signals in Encephalitozoon cuniculi widespread among Microsporidia phylum: support for accurate structural genome annotation.</title>
        <authorList>
            <person name="Peyretaillade E."/>
            <person name="Goncalves O."/>
            <person name="Terrat S."/>
            <person name="Dugat-Bony E."/>
            <person name="Wincker P."/>
            <person name="Cornman R.S."/>
            <person name="Evans J.D."/>
            <person name="Delbac F."/>
            <person name="Peyret P."/>
        </authorList>
    </citation>
    <scope>GENOME REANNOTATION</scope>
    <source>
        <strain>GB-M1</strain>
    </source>
</reference>
<reference key="3">
    <citation type="journal article" date="2003" name="Dev. Genes Evol.">
        <title>The homeobox genes of Encephalitozoon cuniculi (Microsporidia) reveal a putative mating-type locus.</title>
        <authorList>
            <person name="Buerglin T.R."/>
        </authorList>
    </citation>
    <scope>GENE NAME</scope>
</reference>
<dbReference type="EMBL" id="AL590442">
    <property type="protein sequence ID" value="CAD25149.2"/>
    <property type="molecule type" value="Genomic_DNA"/>
</dbReference>
<dbReference type="EMBL" id="BK001342">
    <property type="protein sequence ID" value="DAA01305.1"/>
    <property type="status" value="ALT_INIT"/>
    <property type="molecule type" value="Genomic_DNA"/>
</dbReference>
<dbReference type="RefSeq" id="NP_584645.1">
    <property type="nucleotide sequence ID" value="NM_001040834.1"/>
</dbReference>
<dbReference type="SMR" id="Q8SWA6"/>
<dbReference type="GeneID" id="858635"/>
<dbReference type="KEGG" id="ecu:ECU02_1200"/>
<dbReference type="VEuPathDB" id="MicrosporidiaDB:ECU02_1200"/>
<dbReference type="HOGENOM" id="CLU_128308_0_0_1"/>
<dbReference type="InParanoid" id="Q8SWA6"/>
<dbReference type="OrthoDB" id="6159439at2759"/>
<dbReference type="Proteomes" id="UP000000819">
    <property type="component" value="Chromosome II"/>
</dbReference>
<dbReference type="GO" id="GO:0005634">
    <property type="term" value="C:nucleus"/>
    <property type="evidence" value="ECO:0007669"/>
    <property type="project" value="UniProtKB-SubCell"/>
</dbReference>
<dbReference type="GO" id="GO:0003677">
    <property type="term" value="F:DNA binding"/>
    <property type="evidence" value="ECO:0007669"/>
    <property type="project" value="UniProtKB-KW"/>
</dbReference>
<dbReference type="GO" id="GO:0000981">
    <property type="term" value="F:DNA-binding transcription factor activity, RNA polymerase II-specific"/>
    <property type="evidence" value="ECO:0007669"/>
    <property type="project" value="InterPro"/>
</dbReference>
<dbReference type="CDD" id="cd00086">
    <property type="entry name" value="homeodomain"/>
    <property type="match status" value="1"/>
</dbReference>
<dbReference type="Gene3D" id="1.10.10.60">
    <property type="entry name" value="Homeodomain-like"/>
    <property type="match status" value="1"/>
</dbReference>
<dbReference type="InterPro" id="IPR001356">
    <property type="entry name" value="HD"/>
</dbReference>
<dbReference type="InterPro" id="IPR017970">
    <property type="entry name" value="Homeobox_CS"/>
</dbReference>
<dbReference type="InterPro" id="IPR009057">
    <property type="entry name" value="Homeodomain-like_sf"/>
</dbReference>
<dbReference type="Pfam" id="PF00046">
    <property type="entry name" value="Homeodomain"/>
    <property type="match status" value="1"/>
</dbReference>
<dbReference type="SMART" id="SM00389">
    <property type="entry name" value="HOX"/>
    <property type="match status" value="1"/>
</dbReference>
<dbReference type="SUPFAM" id="SSF46689">
    <property type="entry name" value="Homeodomain-like"/>
    <property type="match status" value="1"/>
</dbReference>
<dbReference type="PROSITE" id="PS00027">
    <property type="entry name" value="HOMEOBOX_1"/>
    <property type="match status" value="1"/>
</dbReference>
<dbReference type="PROSITE" id="PS50071">
    <property type="entry name" value="HOMEOBOX_2"/>
    <property type="match status" value="1"/>
</dbReference>
<evidence type="ECO:0000255" key="1">
    <source>
        <dbReference type="PROSITE-ProRule" id="PRU00108"/>
    </source>
</evidence>
<evidence type="ECO:0000305" key="2"/>
<organism>
    <name type="scientific">Encephalitozoon cuniculi (strain GB-M1)</name>
    <name type="common">Microsporidian parasite</name>
    <dbReference type="NCBI Taxonomy" id="284813"/>
    <lineage>
        <taxon>Eukaryota</taxon>
        <taxon>Fungi</taxon>
        <taxon>Fungi incertae sedis</taxon>
        <taxon>Microsporidia</taxon>
        <taxon>Unikaryonidae</taxon>
        <taxon>Encephalitozoon</taxon>
    </lineage>
</organism>